<name>RS13_BACAC</name>
<reference key="1">
    <citation type="submission" date="2008-10" db="EMBL/GenBank/DDBJ databases">
        <title>Genome sequence of Bacillus anthracis str. CDC 684.</title>
        <authorList>
            <person name="Dodson R.J."/>
            <person name="Munk A.C."/>
            <person name="Brettin T."/>
            <person name="Bruce D."/>
            <person name="Detter C."/>
            <person name="Tapia R."/>
            <person name="Han C."/>
            <person name="Sutton G."/>
            <person name="Sims D."/>
        </authorList>
    </citation>
    <scope>NUCLEOTIDE SEQUENCE [LARGE SCALE GENOMIC DNA]</scope>
    <source>
        <strain>CDC 684 / NRRL 3495</strain>
    </source>
</reference>
<dbReference type="EMBL" id="CP001215">
    <property type="protein sequence ID" value="ACP13638.1"/>
    <property type="molecule type" value="Genomic_DNA"/>
</dbReference>
<dbReference type="RefSeq" id="WP_000090788.1">
    <property type="nucleotide sequence ID" value="NC_012581.1"/>
</dbReference>
<dbReference type="SMR" id="C3LJW9"/>
<dbReference type="GeneID" id="93010918"/>
<dbReference type="KEGG" id="bah:BAMEG_0151"/>
<dbReference type="HOGENOM" id="CLU_103849_1_1_9"/>
<dbReference type="GO" id="GO:0005829">
    <property type="term" value="C:cytosol"/>
    <property type="evidence" value="ECO:0007669"/>
    <property type="project" value="TreeGrafter"/>
</dbReference>
<dbReference type="GO" id="GO:0015935">
    <property type="term" value="C:small ribosomal subunit"/>
    <property type="evidence" value="ECO:0007669"/>
    <property type="project" value="TreeGrafter"/>
</dbReference>
<dbReference type="GO" id="GO:0019843">
    <property type="term" value="F:rRNA binding"/>
    <property type="evidence" value="ECO:0007669"/>
    <property type="project" value="UniProtKB-UniRule"/>
</dbReference>
<dbReference type="GO" id="GO:0003735">
    <property type="term" value="F:structural constituent of ribosome"/>
    <property type="evidence" value="ECO:0007669"/>
    <property type="project" value="InterPro"/>
</dbReference>
<dbReference type="GO" id="GO:0000049">
    <property type="term" value="F:tRNA binding"/>
    <property type="evidence" value="ECO:0007669"/>
    <property type="project" value="UniProtKB-UniRule"/>
</dbReference>
<dbReference type="GO" id="GO:0006412">
    <property type="term" value="P:translation"/>
    <property type="evidence" value="ECO:0007669"/>
    <property type="project" value="UniProtKB-UniRule"/>
</dbReference>
<dbReference type="FunFam" id="1.10.8.50:FF:000001">
    <property type="entry name" value="30S ribosomal protein S13"/>
    <property type="match status" value="1"/>
</dbReference>
<dbReference type="FunFam" id="4.10.910.10:FF:000001">
    <property type="entry name" value="30S ribosomal protein S13"/>
    <property type="match status" value="1"/>
</dbReference>
<dbReference type="Gene3D" id="1.10.8.50">
    <property type="match status" value="1"/>
</dbReference>
<dbReference type="Gene3D" id="4.10.910.10">
    <property type="entry name" value="30s ribosomal protein s13, domain 2"/>
    <property type="match status" value="1"/>
</dbReference>
<dbReference type="HAMAP" id="MF_01315">
    <property type="entry name" value="Ribosomal_uS13"/>
    <property type="match status" value="1"/>
</dbReference>
<dbReference type="InterPro" id="IPR027437">
    <property type="entry name" value="Rbsml_uS13_C"/>
</dbReference>
<dbReference type="InterPro" id="IPR001892">
    <property type="entry name" value="Ribosomal_uS13"/>
</dbReference>
<dbReference type="InterPro" id="IPR010979">
    <property type="entry name" value="Ribosomal_uS13-like_H2TH"/>
</dbReference>
<dbReference type="InterPro" id="IPR019980">
    <property type="entry name" value="Ribosomal_uS13_bac-type"/>
</dbReference>
<dbReference type="InterPro" id="IPR018269">
    <property type="entry name" value="Ribosomal_uS13_CS"/>
</dbReference>
<dbReference type="NCBIfam" id="TIGR03631">
    <property type="entry name" value="uS13_bact"/>
    <property type="match status" value="1"/>
</dbReference>
<dbReference type="PANTHER" id="PTHR10871">
    <property type="entry name" value="30S RIBOSOMAL PROTEIN S13/40S RIBOSOMAL PROTEIN S18"/>
    <property type="match status" value="1"/>
</dbReference>
<dbReference type="PANTHER" id="PTHR10871:SF1">
    <property type="entry name" value="SMALL RIBOSOMAL SUBUNIT PROTEIN US13M"/>
    <property type="match status" value="1"/>
</dbReference>
<dbReference type="Pfam" id="PF00416">
    <property type="entry name" value="Ribosomal_S13"/>
    <property type="match status" value="1"/>
</dbReference>
<dbReference type="PIRSF" id="PIRSF002134">
    <property type="entry name" value="Ribosomal_S13"/>
    <property type="match status" value="1"/>
</dbReference>
<dbReference type="SUPFAM" id="SSF46946">
    <property type="entry name" value="S13-like H2TH domain"/>
    <property type="match status" value="1"/>
</dbReference>
<dbReference type="PROSITE" id="PS00646">
    <property type="entry name" value="RIBOSOMAL_S13_1"/>
    <property type="match status" value="1"/>
</dbReference>
<dbReference type="PROSITE" id="PS50159">
    <property type="entry name" value="RIBOSOMAL_S13_2"/>
    <property type="match status" value="1"/>
</dbReference>
<gene>
    <name evidence="1" type="primary">rpsM</name>
    <name type="ordered locus">BAMEG_0151</name>
</gene>
<evidence type="ECO:0000255" key="1">
    <source>
        <dbReference type="HAMAP-Rule" id="MF_01315"/>
    </source>
</evidence>
<evidence type="ECO:0000256" key="2">
    <source>
        <dbReference type="SAM" id="MobiDB-lite"/>
    </source>
</evidence>
<evidence type="ECO:0000305" key="3"/>
<sequence length="121" mass="13819">MARIAGVDIPRDKRVVISLTYVFGIGRTTAEKILAEAGISEETRVRDLTEDELGRIRDIIDRIKVEGDLRREVSLNIKRLMEIGSYRGLRHRRGLPVRGQNSKNNARTRKGPRRTVANKKK</sequence>
<accession>C3LJW9</accession>
<keyword id="KW-0687">Ribonucleoprotein</keyword>
<keyword id="KW-0689">Ribosomal protein</keyword>
<keyword id="KW-0694">RNA-binding</keyword>
<keyword id="KW-0699">rRNA-binding</keyword>
<keyword id="KW-0820">tRNA-binding</keyword>
<feature type="chain" id="PRO_1000165599" description="Small ribosomal subunit protein uS13">
    <location>
        <begin position="1"/>
        <end position="121"/>
    </location>
</feature>
<feature type="region of interest" description="Disordered" evidence="2">
    <location>
        <begin position="91"/>
        <end position="121"/>
    </location>
</feature>
<feature type="compositionally biased region" description="Basic residues" evidence="2">
    <location>
        <begin position="106"/>
        <end position="121"/>
    </location>
</feature>
<organism>
    <name type="scientific">Bacillus anthracis (strain CDC 684 / NRRL 3495)</name>
    <dbReference type="NCBI Taxonomy" id="568206"/>
    <lineage>
        <taxon>Bacteria</taxon>
        <taxon>Bacillati</taxon>
        <taxon>Bacillota</taxon>
        <taxon>Bacilli</taxon>
        <taxon>Bacillales</taxon>
        <taxon>Bacillaceae</taxon>
        <taxon>Bacillus</taxon>
        <taxon>Bacillus cereus group</taxon>
    </lineage>
</organism>
<protein>
    <recommendedName>
        <fullName evidence="1">Small ribosomal subunit protein uS13</fullName>
    </recommendedName>
    <alternativeName>
        <fullName evidence="3">30S ribosomal protein S13</fullName>
    </alternativeName>
</protein>
<proteinExistence type="inferred from homology"/>
<comment type="function">
    <text evidence="1">Located at the top of the head of the 30S subunit, it contacts several helices of the 16S rRNA. In the 70S ribosome it contacts the 23S rRNA (bridge B1a) and protein L5 of the 50S subunit (bridge B1b), connecting the 2 subunits; these bridges are implicated in subunit movement. Contacts the tRNAs in the A and P-sites.</text>
</comment>
<comment type="subunit">
    <text evidence="1">Part of the 30S ribosomal subunit. Forms a loose heterodimer with protein S19. Forms two bridges to the 50S subunit in the 70S ribosome.</text>
</comment>
<comment type="similarity">
    <text evidence="1">Belongs to the universal ribosomal protein uS13 family.</text>
</comment>